<proteinExistence type="evidence at protein level"/>
<dbReference type="EMBL" id="AK088616">
    <property type="protein sequence ID" value="BAC40455.1"/>
    <property type="molecule type" value="mRNA"/>
</dbReference>
<dbReference type="EMBL" id="AK132766">
    <property type="protein sequence ID" value="BAE21346.1"/>
    <property type="molecule type" value="mRNA"/>
</dbReference>
<dbReference type="EMBL" id="AC168314">
    <property type="status" value="NOT_ANNOTATED_CDS"/>
    <property type="molecule type" value="Genomic_DNA"/>
</dbReference>
<dbReference type="EMBL" id="AC174643">
    <property type="status" value="NOT_ANNOTATED_CDS"/>
    <property type="molecule type" value="Genomic_DNA"/>
</dbReference>
<dbReference type="EMBL" id="CAAA01027656">
    <property type="status" value="NOT_ANNOTATED_CDS"/>
    <property type="molecule type" value="Genomic_DNA"/>
</dbReference>
<dbReference type="EMBL" id="BC069898">
    <property type="protein sequence ID" value="AAH69898.1"/>
    <property type="molecule type" value="mRNA"/>
</dbReference>
<dbReference type="CCDS" id="CCDS85529.1"/>
<dbReference type="RefSeq" id="NP_084530.3">
    <property type="nucleotide sequence ID" value="NM_030254.3"/>
</dbReference>
<dbReference type="SMR" id="Q8BTV1"/>
<dbReference type="BioGRID" id="219774">
    <property type="interactions" value="2"/>
</dbReference>
<dbReference type="ComplexPortal" id="CPX-8739">
    <property type="entry name" value="Oligosaccharyltransferase complex B, TUSC3 variant"/>
</dbReference>
<dbReference type="FunCoup" id="Q8BTV1">
    <property type="interactions" value="1419"/>
</dbReference>
<dbReference type="STRING" id="10090.ENSMUSP00000126080"/>
<dbReference type="GlyConnect" id="2802">
    <property type="glycosylation" value="2 N-Linked glycans (1 site)"/>
</dbReference>
<dbReference type="GlyCosmos" id="Q8BTV1">
    <property type="glycosylation" value="1 site, 2 glycans"/>
</dbReference>
<dbReference type="GlyGen" id="Q8BTV1">
    <property type="glycosylation" value="1 site, 3 N-linked glycans (1 site)"/>
</dbReference>
<dbReference type="iPTMnet" id="Q8BTV1"/>
<dbReference type="PhosphoSitePlus" id="Q8BTV1"/>
<dbReference type="SwissPalm" id="Q8BTV1"/>
<dbReference type="PaxDb" id="10090-ENSMUSP00000126080"/>
<dbReference type="PeptideAtlas" id="Q8BTV1"/>
<dbReference type="ProteomicsDB" id="298031"/>
<dbReference type="Pumba" id="Q8BTV1"/>
<dbReference type="Antibodypedia" id="22197">
    <property type="antibodies" value="172 antibodies from 28 providers"/>
</dbReference>
<dbReference type="DNASU" id="80286"/>
<dbReference type="Ensembl" id="ENSMUST00000239508.1">
    <property type="protein sequence ID" value="ENSMUSP00000159386.2"/>
    <property type="gene ID" value="ENSMUSG00000118664.1"/>
</dbReference>
<dbReference type="GeneID" id="80286"/>
<dbReference type="KEGG" id="mmu:80286"/>
<dbReference type="UCSC" id="uc009lmf.1">
    <property type="organism name" value="mouse"/>
</dbReference>
<dbReference type="AGR" id="MGI:1933134"/>
<dbReference type="CTD" id="7991"/>
<dbReference type="MGI" id="MGI:1933134">
    <property type="gene designation" value="Tusc3"/>
</dbReference>
<dbReference type="VEuPathDB" id="HostDB:ENSMUSG00000039530"/>
<dbReference type="eggNOG" id="KOG2603">
    <property type="taxonomic scope" value="Eukaryota"/>
</dbReference>
<dbReference type="GeneTree" id="ENSGT00390000012030"/>
<dbReference type="HOGENOM" id="CLU_052855_0_0_1"/>
<dbReference type="InParanoid" id="Q8BTV1"/>
<dbReference type="PhylomeDB" id="Q8BTV1"/>
<dbReference type="TreeFam" id="TF314850"/>
<dbReference type="Reactome" id="R-MMU-5223345">
    <property type="pathway name" value="Miscellaneous transport and binding events"/>
</dbReference>
<dbReference type="UniPathway" id="UPA00378"/>
<dbReference type="BioGRID-ORCS" id="80286">
    <property type="hits" value="0 hits in 56 CRISPR screens"/>
</dbReference>
<dbReference type="CD-CODE" id="CE726F99">
    <property type="entry name" value="Postsynaptic density"/>
</dbReference>
<dbReference type="ChiTaRS" id="Tusc3">
    <property type="organism name" value="mouse"/>
</dbReference>
<dbReference type="PRO" id="PR:Q8BTV1"/>
<dbReference type="Proteomes" id="UP000000589">
    <property type="component" value="Chromosome 8"/>
</dbReference>
<dbReference type="RNAct" id="Q8BTV1">
    <property type="molecule type" value="protein"/>
</dbReference>
<dbReference type="ExpressionAtlas" id="Q8BTV1">
    <property type="expression patterns" value="baseline and differential"/>
</dbReference>
<dbReference type="GO" id="GO:0005739">
    <property type="term" value="C:mitochondrion"/>
    <property type="evidence" value="ECO:0007005"/>
    <property type="project" value="MGI"/>
</dbReference>
<dbReference type="GO" id="GO:0008250">
    <property type="term" value="C:oligosaccharyltransferase complex"/>
    <property type="evidence" value="ECO:0000250"/>
    <property type="project" value="UniProtKB"/>
</dbReference>
<dbReference type="GO" id="GO:0062062">
    <property type="term" value="F:oligosaccharyltransferase complex binding"/>
    <property type="evidence" value="ECO:0000250"/>
    <property type="project" value="UniProtKB"/>
</dbReference>
<dbReference type="GO" id="GO:0050890">
    <property type="term" value="P:cognition"/>
    <property type="evidence" value="ECO:0000250"/>
    <property type="project" value="UniProtKB"/>
</dbReference>
<dbReference type="GO" id="GO:0015693">
    <property type="term" value="P:magnesium ion transport"/>
    <property type="evidence" value="ECO:0000250"/>
    <property type="project" value="UniProtKB"/>
</dbReference>
<dbReference type="GO" id="GO:0018279">
    <property type="term" value="P:protein N-linked glycosylation via asparagine"/>
    <property type="evidence" value="ECO:0000250"/>
    <property type="project" value="UniProtKB"/>
</dbReference>
<dbReference type="CDD" id="cd02947">
    <property type="entry name" value="TRX_family"/>
    <property type="match status" value="1"/>
</dbReference>
<dbReference type="FunFam" id="3.40.30.10:FF:000009">
    <property type="entry name" value="Tumor suppressor candidate 3"/>
    <property type="match status" value="1"/>
</dbReference>
<dbReference type="Gene3D" id="3.40.30.10">
    <property type="entry name" value="Glutaredoxin"/>
    <property type="match status" value="1"/>
</dbReference>
<dbReference type="InterPro" id="IPR021149">
    <property type="entry name" value="OligosaccharylTrfase_OST3/OST6"/>
</dbReference>
<dbReference type="InterPro" id="IPR036249">
    <property type="entry name" value="Thioredoxin-like_sf"/>
</dbReference>
<dbReference type="PANTHER" id="PTHR12692">
    <property type="entry name" value="DOLICHYL-DIPHOSPHOOLIGOSACCHARIDE--PROTEIN GLYCOSYLTRANSFERASE-RELATED"/>
    <property type="match status" value="1"/>
</dbReference>
<dbReference type="PANTHER" id="PTHR12692:SF1">
    <property type="entry name" value="TUMOR SUPPRESSOR CANDIDATE 3"/>
    <property type="match status" value="1"/>
</dbReference>
<dbReference type="Pfam" id="PF04756">
    <property type="entry name" value="OST3_OST6"/>
    <property type="match status" value="1"/>
</dbReference>
<dbReference type="SUPFAM" id="SSF52833">
    <property type="entry name" value="Thioredoxin-like"/>
    <property type="match status" value="1"/>
</dbReference>
<reference key="1">
    <citation type="journal article" date="2005" name="Science">
        <title>The transcriptional landscape of the mammalian genome.</title>
        <authorList>
            <person name="Carninci P."/>
            <person name="Kasukawa T."/>
            <person name="Katayama S."/>
            <person name="Gough J."/>
            <person name="Frith M.C."/>
            <person name="Maeda N."/>
            <person name="Oyama R."/>
            <person name="Ravasi T."/>
            <person name="Lenhard B."/>
            <person name="Wells C."/>
            <person name="Kodzius R."/>
            <person name="Shimokawa K."/>
            <person name="Bajic V.B."/>
            <person name="Brenner S.E."/>
            <person name="Batalov S."/>
            <person name="Forrest A.R."/>
            <person name="Zavolan M."/>
            <person name="Davis M.J."/>
            <person name="Wilming L.G."/>
            <person name="Aidinis V."/>
            <person name="Allen J.E."/>
            <person name="Ambesi-Impiombato A."/>
            <person name="Apweiler R."/>
            <person name="Aturaliya R.N."/>
            <person name="Bailey T.L."/>
            <person name="Bansal M."/>
            <person name="Baxter L."/>
            <person name="Beisel K.W."/>
            <person name="Bersano T."/>
            <person name="Bono H."/>
            <person name="Chalk A.M."/>
            <person name="Chiu K.P."/>
            <person name="Choudhary V."/>
            <person name="Christoffels A."/>
            <person name="Clutterbuck D.R."/>
            <person name="Crowe M.L."/>
            <person name="Dalla E."/>
            <person name="Dalrymple B.P."/>
            <person name="de Bono B."/>
            <person name="Della Gatta G."/>
            <person name="di Bernardo D."/>
            <person name="Down T."/>
            <person name="Engstrom P."/>
            <person name="Fagiolini M."/>
            <person name="Faulkner G."/>
            <person name="Fletcher C.F."/>
            <person name="Fukushima T."/>
            <person name="Furuno M."/>
            <person name="Futaki S."/>
            <person name="Gariboldi M."/>
            <person name="Georgii-Hemming P."/>
            <person name="Gingeras T.R."/>
            <person name="Gojobori T."/>
            <person name="Green R.E."/>
            <person name="Gustincich S."/>
            <person name="Harbers M."/>
            <person name="Hayashi Y."/>
            <person name="Hensch T.K."/>
            <person name="Hirokawa N."/>
            <person name="Hill D."/>
            <person name="Huminiecki L."/>
            <person name="Iacono M."/>
            <person name="Ikeo K."/>
            <person name="Iwama A."/>
            <person name="Ishikawa T."/>
            <person name="Jakt M."/>
            <person name="Kanapin A."/>
            <person name="Katoh M."/>
            <person name="Kawasawa Y."/>
            <person name="Kelso J."/>
            <person name="Kitamura H."/>
            <person name="Kitano H."/>
            <person name="Kollias G."/>
            <person name="Krishnan S.P."/>
            <person name="Kruger A."/>
            <person name="Kummerfeld S.K."/>
            <person name="Kurochkin I.V."/>
            <person name="Lareau L.F."/>
            <person name="Lazarevic D."/>
            <person name="Lipovich L."/>
            <person name="Liu J."/>
            <person name="Liuni S."/>
            <person name="McWilliam S."/>
            <person name="Madan Babu M."/>
            <person name="Madera M."/>
            <person name="Marchionni L."/>
            <person name="Matsuda H."/>
            <person name="Matsuzawa S."/>
            <person name="Miki H."/>
            <person name="Mignone F."/>
            <person name="Miyake S."/>
            <person name="Morris K."/>
            <person name="Mottagui-Tabar S."/>
            <person name="Mulder N."/>
            <person name="Nakano N."/>
            <person name="Nakauchi H."/>
            <person name="Ng P."/>
            <person name="Nilsson R."/>
            <person name="Nishiguchi S."/>
            <person name="Nishikawa S."/>
            <person name="Nori F."/>
            <person name="Ohara O."/>
            <person name="Okazaki Y."/>
            <person name="Orlando V."/>
            <person name="Pang K.C."/>
            <person name="Pavan W.J."/>
            <person name="Pavesi G."/>
            <person name="Pesole G."/>
            <person name="Petrovsky N."/>
            <person name="Piazza S."/>
            <person name="Reed J."/>
            <person name="Reid J.F."/>
            <person name="Ring B.Z."/>
            <person name="Ringwald M."/>
            <person name="Rost B."/>
            <person name="Ruan Y."/>
            <person name="Salzberg S.L."/>
            <person name="Sandelin A."/>
            <person name="Schneider C."/>
            <person name="Schoenbach C."/>
            <person name="Sekiguchi K."/>
            <person name="Semple C.A."/>
            <person name="Seno S."/>
            <person name="Sessa L."/>
            <person name="Sheng Y."/>
            <person name="Shibata Y."/>
            <person name="Shimada H."/>
            <person name="Shimada K."/>
            <person name="Silva D."/>
            <person name="Sinclair B."/>
            <person name="Sperling S."/>
            <person name="Stupka E."/>
            <person name="Sugiura K."/>
            <person name="Sultana R."/>
            <person name="Takenaka Y."/>
            <person name="Taki K."/>
            <person name="Tammoja K."/>
            <person name="Tan S.L."/>
            <person name="Tang S."/>
            <person name="Taylor M.S."/>
            <person name="Tegner J."/>
            <person name="Teichmann S.A."/>
            <person name="Ueda H.R."/>
            <person name="van Nimwegen E."/>
            <person name="Verardo R."/>
            <person name="Wei C.L."/>
            <person name="Yagi K."/>
            <person name="Yamanishi H."/>
            <person name="Zabarovsky E."/>
            <person name="Zhu S."/>
            <person name="Zimmer A."/>
            <person name="Hide W."/>
            <person name="Bult C."/>
            <person name="Grimmond S.M."/>
            <person name="Teasdale R.D."/>
            <person name="Liu E.T."/>
            <person name="Brusic V."/>
            <person name="Quackenbush J."/>
            <person name="Wahlestedt C."/>
            <person name="Mattick J.S."/>
            <person name="Hume D.A."/>
            <person name="Kai C."/>
            <person name="Sasaki D."/>
            <person name="Tomaru Y."/>
            <person name="Fukuda S."/>
            <person name="Kanamori-Katayama M."/>
            <person name="Suzuki M."/>
            <person name="Aoki J."/>
            <person name="Arakawa T."/>
            <person name="Iida J."/>
            <person name="Imamura K."/>
            <person name="Itoh M."/>
            <person name="Kato T."/>
            <person name="Kawaji H."/>
            <person name="Kawagashira N."/>
            <person name="Kawashima T."/>
            <person name="Kojima M."/>
            <person name="Kondo S."/>
            <person name="Konno H."/>
            <person name="Nakano K."/>
            <person name="Ninomiya N."/>
            <person name="Nishio T."/>
            <person name="Okada M."/>
            <person name="Plessy C."/>
            <person name="Shibata K."/>
            <person name="Shiraki T."/>
            <person name="Suzuki S."/>
            <person name="Tagami M."/>
            <person name="Waki K."/>
            <person name="Watahiki A."/>
            <person name="Okamura-Oho Y."/>
            <person name="Suzuki H."/>
            <person name="Kawai J."/>
            <person name="Hayashizaki Y."/>
        </authorList>
    </citation>
    <scope>NUCLEOTIDE SEQUENCE [LARGE SCALE MRNA]</scope>
    <source>
        <strain>C57BL/6J</strain>
        <strain>NOD</strain>
        <tissue>Testis</tissue>
        <tissue>Thymus</tissue>
    </source>
</reference>
<reference key="2">
    <citation type="journal article" date="2009" name="PLoS Biol.">
        <title>Lineage-specific biology revealed by a finished genome assembly of the mouse.</title>
        <authorList>
            <person name="Church D.M."/>
            <person name="Goodstadt L."/>
            <person name="Hillier L.W."/>
            <person name="Zody M.C."/>
            <person name="Goldstein S."/>
            <person name="She X."/>
            <person name="Bult C.J."/>
            <person name="Agarwala R."/>
            <person name="Cherry J.L."/>
            <person name="DiCuccio M."/>
            <person name="Hlavina W."/>
            <person name="Kapustin Y."/>
            <person name="Meric P."/>
            <person name="Maglott D."/>
            <person name="Birtle Z."/>
            <person name="Marques A.C."/>
            <person name="Graves T."/>
            <person name="Zhou S."/>
            <person name="Teague B."/>
            <person name="Potamousis K."/>
            <person name="Churas C."/>
            <person name="Place M."/>
            <person name="Herschleb J."/>
            <person name="Runnheim R."/>
            <person name="Forrest D."/>
            <person name="Amos-Landgraf J."/>
            <person name="Schwartz D.C."/>
            <person name="Cheng Z."/>
            <person name="Lindblad-Toh K."/>
            <person name="Eichler E.E."/>
            <person name="Ponting C.P."/>
        </authorList>
    </citation>
    <scope>NUCLEOTIDE SEQUENCE [LARGE SCALE GENOMIC DNA]</scope>
    <source>
        <strain>C57BL/6J</strain>
    </source>
</reference>
<reference key="3">
    <citation type="journal article" date="2004" name="Genome Res.">
        <title>The status, quality, and expansion of the NIH full-length cDNA project: the Mammalian Gene Collection (MGC).</title>
        <authorList>
            <consortium name="The MGC Project Team"/>
        </authorList>
    </citation>
    <scope>NUCLEOTIDE SEQUENCE [LARGE SCALE MRNA]</scope>
    <source>
        <tissue>Eye</tissue>
    </source>
</reference>
<reference key="4">
    <citation type="journal article" date="2010" name="Cell">
        <title>A tissue-specific atlas of mouse protein phosphorylation and expression.</title>
        <authorList>
            <person name="Huttlin E.L."/>
            <person name="Jedrychowski M.P."/>
            <person name="Elias J.E."/>
            <person name="Goswami T."/>
            <person name="Rad R."/>
            <person name="Beausoleil S.A."/>
            <person name="Villen J."/>
            <person name="Haas W."/>
            <person name="Sowa M.E."/>
            <person name="Gygi S.P."/>
        </authorList>
    </citation>
    <scope>IDENTIFICATION BY MASS SPECTROMETRY [LARGE SCALE ANALYSIS]</scope>
    <source>
        <tissue>Testis</tissue>
    </source>
</reference>
<evidence type="ECO:0000250" key="1"/>
<evidence type="ECO:0000250" key="2">
    <source>
        <dbReference type="UniProtKB" id="Q13454"/>
    </source>
</evidence>
<evidence type="ECO:0000255" key="3"/>
<evidence type="ECO:0000305" key="4"/>
<feature type="signal peptide" evidence="3">
    <location>
        <begin position="1"/>
        <end position="41"/>
    </location>
</feature>
<feature type="chain" id="PRO_0000414923" description="Dolichyl-diphosphooligosaccharide--protein glycosyltransferase subunit TUSC3">
    <location>
        <begin position="42"/>
        <end position="347"/>
    </location>
</feature>
<feature type="topological domain" description="Lumenal" evidence="3">
    <location>
        <begin position="42"/>
        <end position="196"/>
    </location>
</feature>
<feature type="transmembrane region" description="Helical" evidence="3">
    <location>
        <begin position="197"/>
        <end position="217"/>
    </location>
</feature>
<feature type="topological domain" description="Cytoplasmic" evidence="3">
    <location>
        <begin position="218"/>
        <end position="221"/>
    </location>
</feature>
<feature type="transmembrane region" description="Helical" evidence="3">
    <location>
        <begin position="222"/>
        <end position="242"/>
    </location>
</feature>
<feature type="topological domain" description="Lumenal" evidence="3">
    <location>
        <begin position="243"/>
        <end position="276"/>
    </location>
</feature>
<feature type="transmembrane region" description="Helical" evidence="3">
    <location>
        <begin position="277"/>
        <end position="297"/>
    </location>
</feature>
<feature type="topological domain" description="Cytoplasmic" evidence="3">
    <location>
        <begin position="298"/>
        <end position="312"/>
    </location>
</feature>
<feature type="transmembrane region" description="Helical" evidence="3">
    <location>
        <begin position="313"/>
        <end position="333"/>
    </location>
</feature>
<feature type="topological domain" description="Lumenal" evidence="3">
    <location>
        <begin position="334"/>
        <end position="347"/>
    </location>
</feature>
<feature type="domain" description="Thioredoxin">
    <location>
        <begin position="59"/>
        <end position="187"/>
    </location>
</feature>
<feature type="glycosylation site" description="N-linked (GlcNAc...) asparagine" evidence="3">
    <location>
        <position position="83"/>
    </location>
</feature>
<feature type="disulfide bond" description="Redox-active" evidence="1">
    <location>
        <begin position="99"/>
        <end position="102"/>
    </location>
</feature>
<accession>Q8BTV1</accession>
<name>TUSC3_MOUSE</name>
<keyword id="KW-1015">Disulfide bond</keyword>
<keyword id="KW-0256">Endoplasmic reticulum</keyword>
<keyword id="KW-0325">Glycoprotein</keyword>
<keyword id="KW-0460">Magnesium</keyword>
<keyword id="KW-0472">Membrane</keyword>
<keyword id="KW-1185">Reference proteome</keyword>
<keyword id="KW-0732">Signal</keyword>
<keyword id="KW-0812">Transmembrane</keyword>
<keyword id="KW-1133">Transmembrane helix</keyword>
<keyword id="KW-0813">Transport</keyword>
<comment type="function">
    <text evidence="2">Acts as accessory component of the N-oligosaccharyl transferase (OST) complex which catalyzes the transfer of a high mannose oligosaccharide from a lipid-linked oligosaccharide donor to an asparagine residue within an Asn-X-Ser/Thr consensus motif in nascent polypeptide chains. Involved in N-glycosylation of STT3B-dependent substrates. Specifically required for the glycosylation of a subset of acceptor sites that are near cysteine residues; in this function seems to act redundantly with MAGT1. In its oxidized form proposed to form transient mixed disulfides with a glycoprotein substrate to facilitate access of STT3B to the unmodified acceptor site. Also has oxidoreductase-independent functions in the STT3B-containing OST complex possibly involving substrate recognition. Could indirectly play a role in Mg(2+) transport.</text>
</comment>
<comment type="pathway">
    <text>Protein modification; protein glycosylation.</text>
</comment>
<comment type="subunit">
    <text evidence="2">Accessory component of the STT3B-containing form of the oligosaccharyltransferase (OST) complex. OST exists in two different complex forms which contain common core subunits RPN1, RPN2, OST48, OST4, DAD1 and TMEM258, either STT3A or STT3B as catalytic subunits, and form-specific accessory subunits. OST can form stable complexes with the Sec61 complex or with both the Sec61 and TRAP complexes. The association of TUSC3 or MAGT1 with the STT3B-containing complex seems to be mutually exclusvice.</text>
</comment>
<comment type="subcellular location">
    <subcellularLocation>
        <location evidence="1">Endoplasmic reticulum membrane</location>
        <topology evidence="1">Multi-pass membrane protein</topology>
    </subcellularLocation>
</comment>
<comment type="similarity">
    <text evidence="4">Belongs to the OST3/OST6 family.</text>
</comment>
<protein>
    <recommendedName>
        <fullName>Dolichyl-diphosphooligosaccharide--protein glycosyltransferase subunit TUSC3</fullName>
        <shortName>Oligosaccharyl transferase subunit TUSC3</shortName>
    </recommendedName>
    <alternativeName>
        <fullName>Magnesium uptake/transporter TUSC3</fullName>
    </alternativeName>
    <alternativeName>
        <fullName>Protein N33</fullName>
    </alternativeName>
    <alternativeName>
        <fullName>Tumor suppressor candidate 3</fullName>
    </alternativeName>
</protein>
<sequence>MSARAAPSRRRQAGRRLRYLPTGSFPFLLLLLLLCIQLGGGQKKKENLLAEKVEQLMEWSSRRSIFRMNGDKFRKFVKAPPRNYSMIVMFTALQPQRQCSVCRQANEEYQILANSWRYSSAFCNKLFFGMVDYDEGTDVFQQLNMNSAPTFMHFPSKGRPKRADTFDLQRIGFAAEQLAKWIADRTDVHIRVFRPPNYSGTIALALLVSLVGGLLYLRRNNLEFIYNKTGWAMVSLCIVFAMTSGQMWNHIRGPPYAHKNPHNGQVSYIHGSSQAQFVAESHIILVLNAAITMGMVLLNEAATSKGDVGKRRIICLVGLGLVVFFFSFLLSIFRSKYHGYPYSFLIK</sequence>
<gene>
    <name type="primary">Tusc3</name>
    <name type="synonym">N33</name>
</gene>
<organism>
    <name type="scientific">Mus musculus</name>
    <name type="common">Mouse</name>
    <dbReference type="NCBI Taxonomy" id="10090"/>
    <lineage>
        <taxon>Eukaryota</taxon>
        <taxon>Metazoa</taxon>
        <taxon>Chordata</taxon>
        <taxon>Craniata</taxon>
        <taxon>Vertebrata</taxon>
        <taxon>Euteleostomi</taxon>
        <taxon>Mammalia</taxon>
        <taxon>Eutheria</taxon>
        <taxon>Euarchontoglires</taxon>
        <taxon>Glires</taxon>
        <taxon>Rodentia</taxon>
        <taxon>Myomorpha</taxon>
        <taxon>Muroidea</taxon>
        <taxon>Muridae</taxon>
        <taxon>Murinae</taxon>
        <taxon>Mus</taxon>
        <taxon>Mus</taxon>
    </lineage>
</organism>